<dbReference type="EC" id="3.2.2.6" evidence="1"/>
<dbReference type="EMBL" id="L32812">
    <property type="protein sequence ID" value="AAA67046.1"/>
    <property type="molecule type" value="mRNA"/>
</dbReference>
<dbReference type="EMBL" id="D31788">
    <property type="protein sequence ID" value="BAA06597.1"/>
    <property type="molecule type" value="mRNA"/>
</dbReference>
<dbReference type="EMBL" id="AK041059">
    <property type="protein sequence ID" value="BAC30804.1"/>
    <property type="molecule type" value="mRNA"/>
</dbReference>
<dbReference type="CCDS" id="CCDS19264.1"/>
<dbReference type="PIR" id="JC2541">
    <property type="entry name" value="JC2541"/>
</dbReference>
<dbReference type="RefSeq" id="NP_033893.2">
    <property type="nucleotide sequence ID" value="NM_009763.3"/>
</dbReference>
<dbReference type="SMR" id="Q64277"/>
<dbReference type="FunCoup" id="Q64277">
    <property type="interactions" value="465"/>
</dbReference>
<dbReference type="STRING" id="10090.ENSMUSP00000098796"/>
<dbReference type="GlyCosmos" id="Q64277">
    <property type="glycosylation" value="4 sites, No reported glycans"/>
</dbReference>
<dbReference type="GlyGen" id="Q64277">
    <property type="glycosylation" value="4 sites, 2 N-linked glycans (2 sites)"/>
</dbReference>
<dbReference type="iPTMnet" id="Q64277"/>
<dbReference type="PhosphoSitePlus" id="Q64277"/>
<dbReference type="SwissPalm" id="Q64277"/>
<dbReference type="jPOST" id="Q64277"/>
<dbReference type="PaxDb" id="10090-ENSMUSP00000098796"/>
<dbReference type="PeptideAtlas" id="Q64277"/>
<dbReference type="ProteomicsDB" id="273707"/>
<dbReference type="DNASU" id="12182"/>
<dbReference type="GeneID" id="12182"/>
<dbReference type="KEGG" id="mmu:12182"/>
<dbReference type="UCSC" id="uc008xia.1">
    <property type="organism name" value="mouse"/>
</dbReference>
<dbReference type="AGR" id="MGI:105370"/>
<dbReference type="CTD" id="683"/>
<dbReference type="MGI" id="MGI:105370">
    <property type="gene designation" value="Bst1"/>
</dbReference>
<dbReference type="eggNOG" id="ENOG502S1HV">
    <property type="taxonomic scope" value="Eukaryota"/>
</dbReference>
<dbReference type="InParanoid" id="Q64277"/>
<dbReference type="OrthoDB" id="9944984at2759"/>
<dbReference type="PhylomeDB" id="Q64277"/>
<dbReference type="TreeFam" id="TF332530"/>
<dbReference type="Reactome" id="R-MMU-163125">
    <property type="pathway name" value="Post-translational modification: synthesis of GPI-anchored proteins"/>
</dbReference>
<dbReference type="Reactome" id="R-MMU-196807">
    <property type="pathway name" value="Nicotinate metabolism"/>
</dbReference>
<dbReference type="Reactome" id="R-MMU-6798695">
    <property type="pathway name" value="Neutrophil degranulation"/>
</dbReference>
<dbReference type="BioGRID-ORCS" id="12182">
    <property type="hits" value="5 hits in 78 CRISPR screens"/>
</dbReference>
<dbReference type="ChiTaRS" id="Bst1">
    <property type="organism name" value="mouse"/>
</dbReference>
<dbReference type="PRO" id="PR:Q64277"/>
<dbReference type="Proteomes" id="UP000000589">
    <property type="component" value="Unplaced"/>
</dbReference>
<dbReference type="RNAct" id="Q64277">
    <property type="molecule type" value="protein"/>
</dbReference>
<dbReference type="GO" id="GO:0005886">
    <property type="term" value="C:plasma membrane"/>
    <property type="evidence" value="ECO:0007669"/>
    <property type="project" value="UniProtKB-SubCell"/>
</dbReference>
<dbReference type="GO" id="GO:0098552">
    <property type="term" value="C:side of membrane"/>
    <property type="evidence" value="ECO:0007669"/>
    <property type="project" value="UniProtKB-KW"/>
</dbReference>
<dbReference type="GO" id="GO:0061809">
    <property type="term" value="F:NAD+ nucleosidase activity, cyclic ADP-ribose generating"/>
    <property type="evidence" value="ECO:0007669"/>
    <property type="project" value="UniProtKB-EC"/>
</dbReference>
<dbReference type="GO" id="GO:0016740">
    <property type="term" value="F:transferase activity"/>
    <property type="evidence" value="ECO:0007669"/>
    <property type="project" value="UniProtKB-KW"/>
</dbReference>
<dbReference type="CDD" id="cd04759">
    <property type="entry name" value="Rib_hydrolase"/>
    <property type="match status" value="1"/>
</dbReference>
<dbReference type="Gene3D" id="1.20.82.10">
    <property type="entry name" value="ADP Ribosyl Cyclase, Chain A, domain 1"/>
    <property type="match status" value="1"/>
</dbReference>
<dbReference type="Gene3D" id="3.40.50.720">
    <property type="entry name" value="NAD(P)-binding Rossmann-like Domain"/>
    <property type="match status" value="1"/>
</dbReference>
<dbReference type="InterPro" id="IPR003193">
    <property type="entry name" value="ADP-ribosyl_cyclase"/>
</dbReference>
<dbReference type="PANTHER" id="PTHR10912">
    <property type="entry name" value="ADP-RIBOSYL CYCLASE"/>
    <property type="match status" value="1"/>
</dbReference>
<dbReference type="PANTHER" id="PTHR10912:SF4">
    <property type="entry name" value="ADP-RIBOSYL CYCLASE_CYCLIC ADP-RIBOSE HYDROLASE 2"/>
    <property type="match status" value="1"/>
</dbReference>
<dbReference type="Pfam" id="PF02267">
    <property type="entry name" value="Rib_hydrolayse"/>
    <property type="match status" value="1"/>
</dbReference>
<dbReference type="SUPFAM" id="SSF52309">
    <property type="entry name" value="N-(deoxy)ribosyltransferase-like"/>
    <property type="match status" value="1"/>
</dbReference>
<protein>
    <recommendedName>
        <fullName>ADP-ribosyl cyclase/cyclic ADP-ribose hydrolase 2</fullName>
        <ecNumber evidence="1">3.2.2.6</ecNumber>
    </recommendedName>
    <alternativeName>
        <fullName>ADP-ribosyl cyclase 2</fullName>
    </alternativeName>
    <alternativeName>
        <fullName>Antigen BP3</fullName>
    </alternativeName>
    <alternativeName>
        <fullName>BP-3 alloantigen</fullName>
    </alternativeName>
    <alternativeName>
        <fullName>Bone marrow stromal antigen 1</fullName>
        <shortName>BST-1</shortName>
    </alternativeName>
    <alternativeName>
        <fullName>Cyclic ADP-ribose hydrolase 2</fullName>
        <shortName>cADPR hydrolase 2</shortName>
    </alternativeName>
    <alternativeName>
        <fullName>Leukocyte antigen 65</fullName>
        <shortName>Ly-65</shortName>
    </alternativeName>
    <cdAntigenName>CD157</cdAntigenName>
</protein>
<feature type="signal peptide" evidence="3">
    <location>
        <begin position="1"/>
        <end position="24"/>
    </location>
</feature>
<feature type="chain" id="PRO_0000004034" description="ADP-ribosyl cyclase/cyclic ADP-ribose hydrolase 2">
    <location>
        <begin position="25"/>
        <end position="286"/>
    </location>
</feature>
<feature type="propeptide" id="PRO_0000004035" evidence="2">
    <location>
        <begin position="287"/>
        <end position="311"/>
    </location>
</feature>
<feature type="binding site" evidence="1">
    <location>
        <position position="102"/>
    </location>
    <ligand>
        <name>NAD(+)</name>
        <dbReference type="ChEBI" id="CHEBI:57540"/>
    </ligand>
</feature>
<feature type="binding site" evidence="1">
    <location>
        <position position="102"/>
    </location>
    <ligand>
        <name>nicotinamide</name>
        <dbReference type="ChEBI" id="CHEBI:17154"/>
    </ligand>
</feature>
<feature type="binding site" evidence="1">
    <location>
        <position position="165"/>
    </location>
    <ligand>
        <name>NAD(+)</name>
        <dbReference type="ChEBI" id="CHEBI:57540"/>
    </ligand>
</feature>
<feature type="binding site" evidence="1">
    <location>
        <position position="203"/>
    </location>
    <ligand>
        <name>NAD(+)</name>
        <dbReference type="ChEBI" id="CHEBI:57540"/>
    </ligand>
</feature>
<feature type="lipid moiety-binding region" description="GPI-anchor amidated serine" evidence="2">
    <location>
        <position position="286"/>
    </location>
</feature>
<feature type="glycosylation site" description="N-linked (GlcNAc...) asparagine" evidence="2">
    <location>
        <position position="59"/>
    </location>
</feature>
<feature type="glycosylation site" description="N-linked (GlcNAc...) asparagine" evidence="2">
    <location>
        <position position="88"/>
    </location>
</feature>
<feature type="glycosylation site" description="N-linked (GlcNAc...) asparagine" evidence="2">
    <location>
        <position position="141"/>
    </location>
</feature>
<feature type="glycosylation site" description="N-linked (GlcNAc...) asparagine" evidence="2">
    <location>
        <position position="185"/>
    </location>
</feature>
<feature type="disulfide bond" evidence="1">
    <location>
        <begin position="46"/>
        <end position="60"/>
    </location>
</feature>
<feature type="disulfide bond" evidence="1">
    <location>
        <begin position="76"/>
        <end position="156"/>
    </location>
</feature>
<feature type="disulfide bond" evidence="1">
    <location>
        <begin position="137"/>
        <end position="150"/>
    </location>
</feature>
<feature type="disulfide bond" evidence="1">
    <location>
        <begin position="231"/>
        <end position="252"/>
    </location>
</feature>
<feature type="disulfide bond" evidence="1">
    <location>
        <begin position="264"/>
        <end position="273"/>
    </location>
</feature>
<feature type="sequence conflict" description="In Ref. 3; BAC30804." evidence="4" ref="3">
    <original>R</original>
    <variation>T</variation>
    <location>
        <position position="30"/>
    </location>
</feature>
<sequence>MAVQGGLLSLWLWLWLSLLTVLLGARARWRGEGTTPHLQSIFLGRCAEYTTLLSLGNKNCTAIWEAFKGVLDKDPCSVLPSDYDLFINLSRHPIPRDKSLFWENNHLLVMSYGENTRRLVALCDVLYGKVGDFLSWCRQENASGLDYQSCPTSEDCENNAVDSYWKSASMQYSRDSSGVINVMLNGSEPKGAYPTRGFFADFEIPYLQKDKVTRIEIWVMHDVGGPNVESCGEGSVKILEDRLEALGFQHSCINDYRPVKFLMCVDHSTHPDCIMNSASASMRRESASLHAIGDASLLISLLVALASSSQA</sequence>
<keyword id="KW-1003">Cell membrane</keyword>
<keyword id="KW-0903">Direct protein sequencing</keyword>
<keyword id="KW-1015">Disulfide bond</keyword>
<keyword id="KW-0325">Glycoprotein</keyword>
<keyword id="KW-0336">GPI-anchor</keyword>
<keyword id="KW-0378">Hydrolase</keyword>
<keyword id="KW-0449">Lipoprotein</keyword>
<keyword id="KW-0472">Membrane</keyword>
<keyword id="KW-0520">NAD</keyword>
<keyword id="KW-1185">Reference proteome</keyword>
<keyword id="KW-0732">Signal</keyword>
<keyword id="KW-0808">Transferase</keyword>
<evidence type="ECO:0000250" key="1">
    <source>
        <dbReference type="UniProtKB" id="Q10588"/>
    </source>
</evidence>
<evidence type="ECO:0000255" key="2"/>
<evidence type="ECO:0000269" key="3">
    <source>
    </source>
</evidence>
<evidence type="ECO:0000305" key="4"/>
<proteinExistence type="evidence at protein level"/>
<organism>
    <name type="scientific">Mus musculus</name>
    <name type="common">Mouse</name>
    <dbReference type="NCBI Taxonomy" id="10090"/>
    <lineage>
        <taxon>Eukaryota</taxon>
        <taxon>Metazoa</taxon>
        <taxon>Chordata</taxon>
        <taxon>Craniata</taxon>
        <taxon>Vertebrata</taxon>
        <taxon>Euteleostomi</taxon>
        <taxon>Mammalia</taxon>
        <taxon>Eutheria</taxon>
        <taxon>Euarchontoglires</taxon>
        <taxon>Glires</taxon>
        <taxon>Rodentia</taxon>
        <taxon>Myomorpha</taxon>
        <taxon>Muroidea</taxon>
        <taxon>Muridae</taxon>
        <taxon>Murinae</taxon>
        <taxon>Mus</taxon>
        <taxon>Mus</taxon>
    </lineage>
</organism>
<name>BST1_MOUSE</name>
<reference key="1">
    <citation type="journal article" date="1994" name="Int. Immunol.">
        <title>The murine BP-3 gene encodes a relative of the CD38/NAD glycohydrolase family.</title>
        <authorList>
            <person name="Dong C."/>
            <person name="Wang J."/>
            <person name="Neame P."/>
            <person name="Cooper M.D."/>
        </authorList>
    </citation>
    <scope>NUCLEOTIDE SEQUENCE [MRNA]</scope>
    <scope>PROTEIN SEQUENCE OF 25-44; 168-180 AND 261-274</scope>
    <source>
        <strain>BALB/cJ</strain>
        <tissue>Lymphoma</tissue>
    </source>
</reference>
<reference key="2">
    <citation type="journal article" date="1994" name="Biochem. Biophys. Res. Commun.">
        <title>Molecular cloning of murine BST-1 having homology with CD38 and Aplysia ADP-ribosyl cyclase.</title>
        <authorList>
            <person name="Itoh M."/>
            <person name="Ishihara K."/>
            <person name="Tomizawa H."/>
            <person name="Tanaka H."/>
            <person name="Kobune Y."/>
            <person name="Ishikawa J."/>
            <person name="Kaisho T."/>
            <person name="Hirano T."/>
        </authorList>
    </citation>
    <scope>NUCLEOTIDE SEQUENCE [MRNA]</scope>
</reference>
<reference key="3">
    <citation type="journal article" date="2005" name="Science">
        <title>The transcriptional landscape of the mammalian genome.</title>
        <authorList>
            <person name="Carninci P."/>
            <person name="Kasukawa T."/>
            <person name="Katayama S."/>
            <person name="Gough J."/>
            <person name="Frith M.C."/>
            <person name="Maeda N."/>
            <person name="Oyama R."/>
            <person name="Ravasi T."/>
            <person name="Lenhard B."/>
            <person name="Wells C."/>
            <person name="Kodzius R."/>
            <person name="Shimokawa K."/>
            <person name="Bajic V.B."/>
            <person name="Brenner S.E."/>
            <person name="Batalov S."/>
            <person name="Forrest A.R."/>
            <person name="Zavolan M."/>
            <person name="Davis M.J."/>
            <person name="Wilming L.G."/>
            <person name="Aidinis V."/>
            <person name="Allen J.E."/>
            <person name="Ambesi-Impiombato A."/>
            <person name="Apweiler R."/>
            <person name="Aturaliya R.N."/>
            <person name="Bailey T.L."/>
            <person name="Bansal M."/>
            <person name="Baxter L."/>
            <person name="Beisel K.W."/>
            <person name="Bersano T."/>
            <person name="Bono H."/>
            <person name="Chalk A.M."/>
            <person name="Chiu K.P."/>
            <person name="Choudhary V."/>
            <person name="Christoffels A."/>
            <person name="Clutterbuck D.R."/>
            <person name="Crowe M.L."/>
            <person name="Dalla E."/>
            <person name="Dalrymple B.P."/>
            <person name="de Bono B."/>
            <person name="Della Gatta G."/>
            <person name="di Bernardo D."/>
            <person name="Down T."/>
            <person name="Engstrom P."/>
            <person name="Fagiolini M."/>
            <person name="Faulkner G."/>
            <person name="Fletcher C.F."/>
            <person name="Fukushima T."/>
            <person name="Furuno M."/>
            <person name="Futaki S."/>
            <person name="Gariboldi M."/>
            <person name="Georgii-Hemming P."/>
            <person name="Gingeras T.R."/>
            <person name="Gojobori T."/>
            <person name="Green R.E."/>
            <person name="Gustincich S."/>
            <person name="Harbers M."/>
            <person name="Hayashi Y."/>
            <person name="Hensch T.K."/>
            <person name="Hirokawa N."/>
            <person name="Hill D."/>
            <person name="Huminiecki L."/>
            <person name="Iacono M."/>
            <person name="Ikeo K."/>
            <person name="Iwama A."/>
            <person name="Ishikawa T."/>
            <person name="Jakt M."/>
            <person name="Kanapin A."/>
            <person name="Katoh M."/>
            <person name="Kawasawa Y."/>
            <person name="Kelso J."/>
            <person name="Kitamura H."/>
            <person name="Kitano H."/>
            <person name="Kollias G."/>
            <person name="Krishnan S.P."/>
            <person name="Kruger A."/>
            <person name="Kummerfeld S.K."/>
            <person name="Kurochkin I.V."/>
            <person name="Lareau L.F."/>
            <person name="Lazarevic D."/>
            <person name="Lipovich L."/>
            <person name="Liu J."/>
            <person name="Liuni S."/>
            <person name="McWilliam S."/>
            <person name="Madan Babu M."/>
            <person name="Madera M."/>
            <person name="Marchionni L."/>
            <person name="Matsuda H."/>
            <person name="Matsuzawa S."/>
            <person name="Miki H."/>
            <person name="Mignone F."/>
            <person name="Miyake S."/>
            <person name="Morris K."/>
            <person name="Mottagui-Tabar S."/>
            <person name="Mulder N."/>
            <person name="Nakano N."/>
            <person name="Nakauchi H."/>
            <person name="Ng P."/>
            <person name="Nilsson R."/>
            <person name="Nishiguchi S."/>
            <person name="Nishikawa S."/>
            <person name="Nori F."/>
            <person name="Ohara O."/>
            <person name="Okazaki Y."/>
            <person name="Orlando V."/>
            <person name="Pang K.C."/>
            <person name="Pavan W.J."/>
            <person name="Pavesi G."/>
            <person name="Pesole G."/>
            <person name="Petrovsky N."/>
            <person name="Piazza S."/>
            <person name="Reed J."/>
            <person name="Reid J.F."/>
            <person name="Ring B.Z."/>
            <person name="Ringwald M."/>
            <person name="Rost B."/>
            <person name="Ruan Y."/>
            <person name="Salzberg S.L."/>
            <person name="Sandelin A."/>
            <person name="Schneider C."/>
            <person name="Schoenbach C."/>
            <person name="Sekiguchi K."/>
            <person name="Semple C.A."/>
            <person name="Seno S."/>
            <person name="Sessa L."/>
            <person name="Sheng Y."/>
            <person name="Shibata Y."/>
            <person name="Shimada H."/>
            <person name="Shimada K."/>
            <person name="Silva D."/>
            <person name="Sinclair B."/>
            <person name="Sperling S."/>
            <person name="Stupka E."/>
            <person name="Sugiura K."/>
            <person name="Sultana R."/>
            <person name="Takenaka Y."/>
            <person name="Taki K."/>
            <person name="Tammoja K."/>
            <person name="Tan S.L."/>
            <person name="Tang S."/>
            <person name="Taylor M.S."/>
            <person name="Tegner J."/>
            <person name="Teichmann S.A."/>
            <person name="Ueda H.R."/>
            <person name="van Nimwegen E."/>
            <person name="Verardo R."/>
            <person name="Wei C.L."/>
            <person name="Yagi K."/>
            <person name="Yamanishi H."/>
            <person name="Zabarovsky E."/>
            <person name="Zhu S."/>
            <person name="Zimmer A."/>
            <person name="Hide W."/>
            <person name="Bult C."/>
            <person name="Grimmond S.M."/>
            <person name="Teasdale R.D."/>
            <person name="Liu E.T."/>
            <person name="Brusic V."/>
            <person name="Quackenbush J."/>
            <person name="Wahlestedt C."/>
            <person name="Mattick J.S."/>
            <person name="Hume D.A."/>
            <person name="Kai C."/>
            <person name="Sasaki D."/>
            <person name="Tomaru Y."/>
            <person name="Fukuda S."/>
            <person name="Kanamori-Katayama M."/>
            <person name="Suzuki M."/>
            <person name="Aoki J."/>
            <person name="Arakawa T."/>
            <person name="Iida J."/>
            <person name="Imamura K."/>
            <person name="Itoh M."/>
            <person name="Kato T."/>
            <person name="Kawaji H."/>
            <person name="Kawagashira N."/>
            <person name="Kawashima T."/>
            <person name="Kojima M."/>
            <person name="Kondo S."/>
            <person name="Konno H."/>
            <person name="Nakano K."/>
            <person name="Ninomiya N."/>
            <person name="Nishio T."/>
            <person name="Okada M."/>
            <person name="Plessy C."/>
            <person name="Shibata K."/>
            <person name="Shiraki T."/>
            <person name="Suzuki S."/>
            <person name="Tagami M."/>
            <person name="Waki K."/>
            <person name="Watahiki A."/>
            <person name="Okamura-Oho Y."/>
            <person name="Suzuki H."/>
            <person name="Kawai J."/>
            <person name="Hayashizaki Y."/>
        </authorList>
    </citation>
    <scope>NUCLEOTIDE SEQUENCE [LARGE SCALE MRNA]</scope>
    <source>
        <strain>C57BL/6J</strain>
        <tissue>Aorta</tissue>
    </source>
</reference>
<accession>Q64277</accession>
<accession>Q8BRY3</accession>
<comment type="function">
    <text evidence="1">Catalyzes both the synthesis of cyclic ADP-beta-D-ribose (cADPR) from NAD(+), and its hydrolysis to ADP-D-ribose (ADPR). Cyclic ADPR is known to serve as an endogenous second messenger that elicits calcium release from intracellular stores, and thus regulates the mobilization of intracellular calcium. May be involved in pre-B-cell growth.</text>
</comment>
<comment type="catalytic activity">
    <reaction evidence="1">
        <text>NAD(+) + H2O = ADP-D-ribose + nicotinamide + H(+)</text>
        <dbReference type="Rhea" id="RHEA:16301"/>
        <dbReference type="ChEBI" id="CHEBI:15377"/>
        <dbReference type="ChEBI" id="CHEBI:15378"/>
        <dbReference type="ChEBI" id="CHEBI:17154"/>
        <dbReference type="ChEBI" id="CHEBI:57540"/>
        <dbReference type="ChEBI" id="CHEBI:57967"/>
        <dbReference type="EC" id="3.2.2.6"/>
    </reaction>
    <physiologicalReaction direction="left-to-right" evidence="1">
        <dbReference type="Rhea" id="RHEA:16302"/>
    </physiologicalReaction>
</comment>
<comment type="catalytic activity">
    <reaction evidence="1">
        <text>NAD(+) = cyclic ADP-beta-D-ribose + nicotinamide + H(+)</text>
        <dbReference type="Rhea" id="RHEA:38611"/>
        <dbReference type="ChEBI" id="CHEBI:15378"/>
        <dbReference type="ChEBI" id="CHEBI:17154"/>
        <dbReference type="ChEBI" id="CHEBI:57540"/>
        <dbReference type="ChEBI" id="CHEBI:73672"/>
    </reaction>
    <physiologicalReaction direction="left-to-right" evidence="1">
        <dbReference type="Rhea" id="RHEA:38612"/>
    </physiologicalReaction>
</comment>
<comment type="catalytic activity">
    <reaction evidence="1">
        <text>cyclic ADP-beta-D-ribose + H2O = ADP-D-ribose</text>
        <dbReference type="Rhea" id="RHEA:38615"/>
        <dbReference type="ChEBI" id="CHEBI:15377"/>
        <dbReference type="ChEBI" id="CHEBI:57967"/>
        <dbReference type="ChEBI" id="CHEBI:73672"/>
    </reaction>
    <physiologicalReaction direction="left-to-right" evidence="1">
        <dbReference type="Rhea" id="RHEA:38616"/>
    </physiologicalReaction>
</comment>
<comment type="subunit">
    <text evidence="1">Homodimer.</text>
</comment>
<comment type="subcellular location">
    <subcellularLocation>
        <location evidence="1">Cell membrane</location>
        <topology evidence="1">Lipid-anchor</topology>
        <topology evidence="1">GPI-anchor</topology>
    </subcellularLocation>
</comment>
<comment type="tissue specificity">
    <text>Expressed in the bone marrow, spleen and thymus in lymphoid organs, and the lung, kidney and heart in non-lymphoid organs.</text>
</comment>
<comment type="similarity">
    <text evidence="4">Belongs to the ADP-ribosyl cyclase family.</text>
</comment>
<gene>
    <name type="primary">Bst1</name>
    <name type="synonym">Bp-3</name>
    <name type="synonym">Bp3</name>
    <name type="synonym">Ly65</name>
</gene>